<evidence type="ECO:0000255" key="1">
    <source>
        <dbReference type="HAMAP-Rule" id="MF_01051"/>
    </source>
</evidence>
<dbReference type="EC" id="4.2.1.149" evidence="1"/>
<dbReference type="EMBL" id="AE017220">
    <property type="protein sequence ID" value="AAX63970.1"/>
    <property type="molecule type" value="Genomic_DNA"/>
</dbReference>
<dbReference type="RefSeq" id="WP_000004376.1">
    <property type="nucleotide sequence ID" value="NC_006905.1"/>
</dbReference>
<dbReference type="SMR" id="Q57TJ1"/>
<dbReference type="KEGG" id="sec:SCH_0064"/>
<dbReference type="HOGENOM" id="CLU_009834_7_6_6"/>
<dbReference type="UniPathway" id="UPA00117"/>
<dbReference type="Proteomes" id="UP000000538">
    <property type="component" value="Chromosome"/>
</dbReference>
<dbReference type="GO" id="GO:0016836">
    <property type="term" value="F:hydro-lyase activity"/>
    <property type="evidence" value="ECO:0007669"/>
    <property type="project" value="UniProtKB-UniRule"/>
</dbReference>
<dbReference type="GO" id="GO:0008735">
    <property type="term" value="F:L-carnitine CoA-transferase activity"/>
    <property type="evidence" value="ECO:0007669"/>
    <property type="project" value="RHEA"/>
</dbReference>
<dbReference type="GO" id="GO:0009437">
    <property type="term" value="P:carnitine metabolic process"/>
    <property type="evidence" value="ECO:0007669"/>
    <property type="project" value="UniProtKB-UniRule"/>
</dbReference>
<dbReference type="GO" id="GO:0006635">
    <property type="term" value="P:fatty acid beta-oxidation"/>
    <property type="evidence" value="ECO:0007669"/>
    <property type="project" value="TreeGrafter"/>
</dbReference>
<dbReference type="CDD" id="cd06558">
    <property type="entry name" value="crotonase-like"/>
    <property type="match status" value="1"/>
</dbReference>
<dbReference type="FunFam" id="1.10.12.10:FF:000005">
    <property type="entry name" value="Carnitinyl-CoA dehydratase"/>
    <property type="match status" value="1"/>
</dbReference>
<dbReference type="FunFam" id="3.90.226.10:FF:000009">
    <property type="entry name" value="Carnitinyl-CoA dehydratase"/>
    <property type="match status" value="1"/>
</dbReference>
<dbReference type="Gene3D" id="3.90.226.10">
    <property type="entry name" value="2-enoyl-CoA Hydratase, Chain A, domain 1"/>
    <property type="match status" value="1"/>
</dbReference>
<dbReference type="Gene3D" id="1.10.12.10">
    <property type="entry name" value="Lyase 2-enoyl-coa Hydratase, Chain A, domain 2"/>
    <property type="match status" value="1"/>
</dbReference>
<dbReference type="HAMAP" id="MF_01051">
    <property type="entry name" value="CaiD"/>
    <property type="match status" value="1"/>
</dbReference>
<dbReference type="InterPro" id="IPR022852">
    <property type="entry name" value="Carnitinyl_CoA_dehydratase"/>
</dbReference>
<dbReference type="InterPro" id="IPR029045">
    <property type="entry name" value="ClpP/crotonase-like_dom_sf"/>
</dbReference>
<dbReference type="InterPro" id="IPR018376">
    <property type="entry name" value="Enoyl-CoA_hyd/isom_CS"/>
</dbReference>
<dbReference type="InterPro" id="IPR001753">
    <property type="entry name" value="Enoyl-CoA_hydra/iso"/>
</dbReference>
<dbReference type="InterPro" id="IPR014748">
    <property type="entry name" value="Enoyl-CoA_hydra_C"/>
</dbReference>
<dbReference type="NCBIfam" id="NF002936">
    <property type="entry name" value="PRK03580.1"/>
    <property type="match status" value="1"/>
</dbReference>
<dbReference type="PANTHER" id="PTHR11941:SF54">
    <property type="entry name" value="ENOYL-COA HYDRATASE, MITOCHONDRIAL"/>
    <property type="match status" value="1"/>
</dbReference>
<dbReference type="PANTHER" id="PTHR11941">
    <property type="entry name" value="ENOYL-COA HYDRATASE-RELATED"/>
    <property type="match status" value="1"/>
</dbReference>
<dbReference type="Pfam" id="PF00378">
    <property type="entry name" value="ECH_1"/>
    <property type="match status" value="1"/>
</dbReference>
<dbReference type="SUPFAM" id="SSF52096">
    <property type="entry name" value="ClpP/crotonase"/>
    <property type="match status" value="1"/>
</dbReference>
<dbReference type="PROSITE" id="PS00166">
    <property type="entry name" value="ENOYL_COA_HYDRATASE"/>
    <property type="match status" value="1"/>
</dbReference>
<name>CAID_SALCH</name>
<proteinExistence type="inferred from homology"/>
<comment type="function">
    <text evidence="1">Catalyzes the reversible dehydration of L-carnitinyl-CoA to crotonobetainyl-CoA.</text>
</comment>
<comment type="catalytic activity">
    <reaction evidence="1">
        <text>(R)-carnitinyl-CoA = crotonobetainyl-CoA + H2O</text>
        <dbReference type="Rhea" id="RHEA:28338"/>
        <dbReference type="ChEBI" id="CHEBI:15377"/>
        <dbReference type="ChEBI" id="CHEBI:60932"/>
        <dbReference type="ChEBI" id="CHEBI:60933"/>
        <dbReference type="EC" id="4.2.1.149"/>
    </reaction>
</comment>
<comment type="pathway">
    <text evidence="1">Amine and polyamine metabolism; carnitine metabolism.</text>
</comment>
<comment type="similarity">
    <text evidence="1">Belongs to the enoyl-CoA hydratase/isomerase family.</text>
</comment>
<keyword id="KW-0456">Lyase</keyword>
<accession>Q57TJ1</accession>
<organism>
    <name type="scientific">Salmonella choleraesuis (strain SC-B67)</name>
    <dbReference type="NCBI Taxonomy" id="321314"/>
    <lineage>
        <taxon>Bacteria</taxon>
        <taxon>Pseudomonadati</taxon>
        <taxon>Pseudomonadota</taxon>
        <taxon>Gammaproteobacteria</taxon>
        <taxon>Enterobacterales</taxon>
        <taxon>Enterobacteriaceae</taxon>
        <taxon>Salmonella</taxon>
    </lineage>
</organism>
<gene>
    <name evidence="1" type="primary">caiD</name>
    <name type="ordered locus">SCH_0064</name>
</gene>
<sequence length="261" mass="28106">MSESLHLTRNGPILEITLDRPKANAIDAKTSFAMGEAFLNFRDDPELRVAIITGGGEKFFSAGWDLKAAAEGEAPDADFGPGGFAGLTEIFDLDKPVIAAVNGYAFGGGFELALAADFIVCAENASFALPEAKLGIVPDSGGVLRLPKLLPPAIVNEMVMTGRRMSAEEALRWGIVNRVVSQSELMDSARELAQQLVNSAPLAIAALKEIYRATSEMPVEEGYRYIRSGVLKHYPSVLHSEDALEGPQAFAEKRDPVWKGR</sequence>
<feature type="chain" id="PRO_1000064342" description="Carnitinyl-CoA dehydratase">
    <location>
        <begin position="1"/>
        <end position="261"/>
    </location>
</feature>
<feature type="active site" description="Nucleophile" evidence="1">
    <location>
        <position position="111"/>
    </location>
</feature>
<feature type="active site" description="Proton acceptor" evidence="1">
    <location>
        <position position="131"/>
    </location>
</feature>
<reference key="1">
    <citation type="journal article" date="2005" name="Nucleic Acids Res.">
        <title>The genome sequence of Salmonella enterica serovar Choleraesuis, a highly invasive and resistant zoonotic pathogen.</title>
        <authorList>
            <person name="Chiu C.-H."/>
            <person name="Tang P."/>
            <person name="Chu C."/>
            <person name="Hu S."/>
            <person name="Bao Q."/>
            <person name="Yu J."/>
            <person name="Chou Y.-Y."/>
            <person name="Wang H.-S."/>
            <person name="Lee Y.-S."/>
        </authorList>
    </citation>
    <scope>NUCLEOTIDE SEQUENCE [LARGE SCALE GENOMIC DNA]</scope>
    <source>
        <strain>SC-B67</strain>
    </source>
</reference>
<protein>
    <recommendedName>
        <fullName evidence="1">Carnitinyl-CoA dehydratase</fullName>
        <ecNumber evidence="1">4.2.1.149</ecNumber>
    </recommendedName>
    <alternativeName>
        <fullName evidence="1">Crotonobetainyl-CoA hydratase</fullName>
    </alternativeName>
</protein>